<reference key="1">
    <citation type="journal article" date="2004" name="Science">
        <title>Illuminating the evolutionary history of chlamydiae.</title>
        <authorList>
            <person name="Horn M."/>
            <person name="Collingro A."/>
            <person name="Schmitz-Esser S."/>
            <person name="Beier C.L."/>
            <person name="Purkhold U."/>
            <person name="Fartmann B."/>
            <person name="Brandt P."/>
            <person name="Nyakatura G.J."/>
            <person name="Droege M."/>
            <person name="Frishman D."/>
            <person name="Rattei T."/>
            <person name="Mewes H.-W."/>
            <person name="Wagner M."/>
        </authorList>
    </citation>
    <scope>NUCLEOTIDE SEQUENCE [LARGE SCALE GENOMIC DNA]</scope>
    <source>
        <strain>UWE25</strain>
    </source>
</reference>
<keyword id="KW-0143">Chaperone</keyword>
<keyword id="KW-0963">Cytoplasm</keyword>
<keyword id="KW-0235">DNA replication</keyword>
<keyword id="KW-0479">Metal-binding</keyword>
<keyword id="KW-1185">Reference proteome</keyword>
<keyword id="KW-0677">Repeat</keyword>
<keyword id="KW-0346">Stress response</keyword>
<keyword id="KW-0862">Zinc</keyword>
<keyword id="KW-0863">Zinc-finger</keyword>
<accession>Q6ME07</accession>
<proteinExistence type="inferred from homology"/>
<organism>
    <name type="scientific">Protochlamydia amoebophila (strain UWE25)</name>
    <dbReference type="NCBI Taxonomy" id="264201"/>
    <lineage>
        <taxon>Bacteria</taxon>
        <taxon>Pseudomonadati</taxon>
        <taxon>Chlamydiota</taxon>
        <taxon>Chlamydiia</taxon>
        <taxon>Parachlamydiales</taxon>
        <taxon>Parachlamydiaceae</taxon>
        <taxon>Candidatus Protochlamydia</taxon>
    </lineage>
</organism>
<feature type="chain" id="PRO_0000070846" description="Chaperone protein DnaJ">
    <location>
        <begin position="1"/>
        <end position="386"/>
    </location>
</feature>
<feature type="domain" description="J" evidence="1">
    <location>
        <begin position="3"/>
        <end position="68"/>
    </location>
</feature>
<feature type="repeat" description="CXXCXGXG motif">
    <location>
        <begin position="159"/>
        <end position="166"/>
    </location>
</feature>
<feature type="repeat" description="CXXCXGXG motif">
    <location>
        <begin position="176"/>
        <end position="183"/>
    </location>
</feature>
<feature type="repeat" description="CXXCXGXG motif">
    <location>
        <begin position="198"/>
        <end position="205"/>
    </location>
</feature>
<feature type="repeat" description="CXXCXGXG motif">
    <location>
        <begin position="212"/>
        <end position="219"/>
    </location>
</feature>
<feature type="zinc finger region" description="CR-type" evidence="1">
    <location>
        <begin position="146"/>
        <end position="224"/>
    </location>
</feature>
<feature type="binding site" evidence="1">
    <location>
        <position position="159"/>
    </location>
    <ligand>
        <name>Zn(2+)</name>
        <dbReference type="ChEBI" id="CHEBI:29105"/>
        <label>1</label>
    </ligand>
</feature>
<feature type="binding site" evidence="1">
    <location>
        <position position="162"/>
    </location>
    <ligand>
        <name>Zn(2+)</name>
        <dbReference type="ChEBI" id="CHEBI:29105"/>
        <label>1</label>
    </ligand>
</feature>
<feature type="binding site" evidence="1">
    <location>
        <position position="176"/>
    </location>
    <ligand>
        <name>Zn(2+)</name>
        <dbReference type="ChEBI" id="CHEBI:29105"/>
        <label>2</label>
    </ligand>
</feature>
<feature type="binding site" evidence="1">
    <location>
        <position position="179"/>
    </location>
    <ligand>
        <name>Zn(2+)</name>
        <dbReference type="ChEBI" id="CHEBI:29105"/>
        <label>2</label>
    </ligand>
</feature>
<feature type="binding site" evidence="1">
    <location>
        <position position="198"/>
    </location>
    <ligand>
        <name>Zn(2+)</name>
        <dbReference type="ChEBI" id="CHEBI:29105"/>
        <label>2</label>
    </ligand>
</feature>
<feature type="binding site" evidence="1">
    <location>
        <position position="201"/>
    </location>
    <ligand>
        <name>Zn(2+)</name>
        <dbReference type="ChEBI" id="CHEBI:29105"/>
        <label>2</label>
    </ligand>
</feature>
<feature type="binding site" evidence="1">
    <location>
        <position position="212"/>
    </location>
    <ligand>
        <name>Zn(2+)</name>
        <dbReference type="ChEBI" id="CHEBI:29105"/>
        <label>1</label>
    </ligand>
</feature>
<feature type="binding site" evidence="1">
    <location>
        <position position="215"/>
    </location>
    <ligand>
        <name>Zn(2+)</name>
        <dbReference type="ChEBI" id="CHEBI:29105"/>
        <label>1</label>
    </ligand>
</feature>
<dbReference type="EMBL" id="BX908798">
    <property type="protein sequence ID" value="CAF23192.1"/>
    <property type="molecule type" value="Genomic_DNA"/>
</dbReference>
<dbReference type="RefSeq" id="WP_011175018.1">
    <property type="nucleotide sequence ID" value="NC_005861.2"/>
</dbReference>
<dbReference type="SMR" id="Q6ME07"/>
<dbReference type="STRING" id="264201.pc0468"/>
<dbReference type="KEGG" id="pcu:PC_RS02275"/>
<dbReference type="eggNOG" id="COG0484">
    <property type="taxonomic scope" value="Bacteria"/>
</dbReference>
<dbReference type="HOGENOM" id="CLU_017633_0_7_0"/>
<dbReference type="OrthoDB" id="9779889at2"/>
<dbReference type="Proteomes" id="UP000000529">
    <property type="component" value="Chromosome"/>
</dbReference>
<dbReference type="GO" id="GO:0005737">
    <property type="term" value="C:cytoplasm"/>
    <property type="evidence" value="ECO:0007669"/>
    <property type="project" value="UniProtKB-SubCell"/>
</dbReference>
<dbReference type="GO" id="GO:0005524">
    <property type="term" value="F:ATP binding"/>
    <property type="evidence" value="ECO:0007669"/>
    <property type="project" value="InterPro"/>
</dbReference>
<dbReference type="GO" id="GO:0031072">
    <property type="term" value="F:heat shock protein binding"/>
    <property type="evidence" value="ECO:0007669"/>
    <property type="project" value="InterPro"/>
</dbReference>
<dbReference type="GO" id="GO:0051082">
    <property type="term" value="F:unfolded protein binding"/>
    <property type="evidence" value="ECO:0007669"/>
    <property type="project" value="UniProtKB-UniRule"/>
</dbReference>
<dbReference type="GO" id="GO:0008270">
    <property type="term" value="F:zinc ion binding"/>
    <property type="evidence" value="ECO:0007669"/>
    <property type="project" value="UniProtKB-UniRule"/>
</dbReference>
<dbReference type="GO" id="GO:0051085">
    <property type="term" value="P:chaperone cofactor-dependent protein refolding"/>
    <property type="evidence" value="ECO:0007669"/>
    <property type="project" value="TreeGrafter"/>
</dbReference>
<dbReference type="GO" id="GO:0006260">
    <property type="term" value="P:DNA replication"/>
    <property type="evidence" value="ECO:0007669"/>
    <property type="project" value="UniProtKB-KW"/>
</dbReference>
<dbReference type="GO" id="GO:0042026">
    <property type="term" value="P:protein refolding"/>
    <property type="evidence" value="ECO:0007669"/>
    <property type="project" value="TreeGrafter"/>
</dbReference>
<dbReference type="GO" id="GO:0009408">
    <property type="term" value="P:response to heat"/>
    <property type="evidence" value="ECO:0007669"/>
    <property type="project" value="InterPro"/>
</dbReference>
<dbReference type="CDD" id="cd06257">
    <property type="entry name" value="DnaJ"/>
    <property type="match status" value="1"/>
</dbReference>
<dbReference type="CDD" id="cd10747">
    <property type="entry name" value="DnaJ_C"/>
    <property type="match status" value="1"/>
</dbReference>
<dbReference type="CDD" id="cd10719">
    <property type="entry name" value="DnaJ_zf"/>
    <property type="match status" value="1"/>
</dbReference>
<dbReference type="FunFam" id="1.10.287.110:FF:000034">
    <property type="entry name" value="Chaperone protein DnaJ"/>
    <property type="match status" value="1"/>
</dbReference>
<dbReference type="FunFam" id="2.10.230.10:FF:000002">
    <property type="entry name" value="Molecular chaperone DnaJ"/>
    <property type="match status" value="1"/>
</dbReference>
<dbReference type="FunFam" id="2.60.260.20:FF:000004">
    <property type="entry name" value="Molecular chaperone DnaJ"/>
    <property type="match status" value="1"/>
</dbReference>
<dbReference type="Gene3D" id="1.10.287.110">
    <property type="entry name" value="DnaJ domain"/>
    <property type="match status" value="1"/>
</dbReference>
<dbReference type="Gene3D" id="2.10.230.10">
    <property type="entry name" value="Heat shock protein DnaJ, cysteine-rich domain"/>
    <property type="match status" value="1"/>
</dbReference>
<dbReference type="Gene3D" id="2.60.260.20">
    <property type="entry name" value="Urease metallochaperone UreE, N-terminal domain"/>
    <property type="match status" value="2"/>
</dbReference>
<dbReference type="HAMAP" id="MF_01152">
    <property type="entry name" value="DnaJ"/>
    <property type="match status" value="1"/>
</dbReference>
<dbReference type="InterPro" id="IPR012724">
    <property type="entry name" value="DnaJ"/>
</dbReference>
<dbReference type="InterPro" id="IPR002939">
    <property type="entry name" value="DnaJ_C"/>
</dbReference>
<dbReference type="InterPro" id="IPR001623">
    <property type="entry name" value="DnaJ_domain"/>
</dbReference>
<dbReference type="InterPro" id="IPR018253">
    <property type="entry name" value="DnaJ_domain_CS"/>
</dbReference>
<dbReference type="InterPro" id="IPR008971">
    <property type="entry name" value="HSP40/DnaJ_pept-bd"/>
</dbReference>
<dbReference type="InterPro" id="IPR001305">
    <property type="entry name" value="HSP_DnaJ_Cys-rich_dom"/>
</dbReference>
<dbReference type="InterPro" id="IPR036410">
    <property type="entry name" value="HSP_DnaJ_Cys-rich_dom_sf"/>
</dbReference>
<dbReference type="InterPro" id="IPR036869">
    <property type="entry name" value="J_dom_sf"/>
</dbReference>
<dbReference type="NCBIfam" id="TIGR02349">
    <property type="entry name" value="DnaJ_bact"/>
    <property type="match status" value="1"/>
</dbReference>
<dbReference type="NCBIfam" id="NF008035">
    <property type="entry name" value="PRK10767.1"/>
    <property type="match status" value="1"/>
</dbReference>
<dbReference type="NCBIfam" id="NF010877">
    <property type="entry name" value="PRK14284.1"/>
    <property type="match status" value="1"/>
</dbReference>
<dbReference type="PANTHER" id="PTHR43096:SF48">
    <property type="entry name" value="CHAPERONE PROTEIN DNAJ"/>
    <property type="match status" value="1"/>
</dbReference>
<dbReference type="PANTHER" id="PTHR43096">
    <property type="entry name" value="DNAJ HOMOLOG 1, MITOCHONDRIAL-RELATED"/>
    <property type="match status" value="1"/>
</dbReference>
<dbReference type="Pfam" id="PF00226">
    <property type="entry name" value="DnaJ"/>
    <property type="match status" value="1"/>
</dbReference>
<dbReference type="Pfam" id="PF01556">
    <property type="entry name" value="DnaJ_C"/>
    <property type="match status" value="1"/>
</dbReference>
<dbReference type="Pfam" id="PF00684">
    <property type="entry name" value="DnaJ_CXXCXGXG"/>
    <property type="match status" value="1"/>
</dbReference>
<dbReference type="PRINTS" id="PR00625">
    <property type="entry name" value="JDOMAIN"/>
</dbReference>
<dbReference type="SMART" id="SM00271">
    <property type="entry name" value="DnaJ"/>
    <property type="match status" value="1"/>
</dbReference>
<dbReference type="SUPFAM" id="SSF46565">
    <property type="entry name" value="Chaperone J-domain"/>
    <property type="match status" value="1"/>
</dbReference>
<dbReference type="SUPFAM" id="SSF57938">
    <property type="entry name" value="DnaJ/Hsp40 cysteine-rich domain"/>
    <property type="match status" value="1"/>
</dbReference>
<dbReference type="SUPFAM" id="SSF49493">
    <property type="entry name" value="HSP40/DnaJ peptide-binding domain"/>
    <property type="match status" value="2"/>
</dbReference>
<dbReference type="PROSITE" id="PS00636">
    <property type="entry name" value="DNAJ_1"/>
    <property type="match status" value="1"/>
</dbReference>
<dbReference type="PROSITE" id="PS50076">
    <property type="entry name" value="DNAJ_2"/>
    <property type="match status" value="1"/>
</dbReference>
<dbReference type="PROSITE" id="PS51188">
    <property type="entry name" value="ZF_CR"/>
    <property type="match status" value="1"/>
</dbReference>
<evidence type="ECO:0000255" key="1">
    <source>
        <dbReference type="HAMAP-Rule" id="MF_01152"/>
    </source>
</evidence>
<sequence>MADYYEILEVARGATPEEIKKAYRKKAVQYHPDKNPGDADAEKRFKEISEAYEVLSDEKKRQVYDRYGKEALQGAAGGGQGFSSMDEALRTFMGAFGMGGGGESIFDFFGGGNGAEFGGREGGRGARQGASKRVNINVSFEEAVKGVDKELVISNYANCNVCNGKGSSSSQGIKTCSECKGRGQVFEQRGFFSMTMACPKCHGEGKVITDPCKNCKGQGAVKEKQHIKVHIPAGVDSGMRLKMSGYGDVGQHGGPAGDLYVFINVEPHEIFEREGNDILLDLPISFAEAALGCKKEVPSLTNRACRITIPEGTQNGKIFRVKGEGFPNVHGHGKGDLLVRIFVETPTRLSERQKELLQEFSELEGPNNLPKRKGFLDKIKEFFSPN</sequence>
<name>DNAJ_PARUW</name>
<protein>
    <recommendedName>
        <fullName evidence="1">Chaperone protein DnaJ</fullName>
    </recommendedName>
</protein>
<gene>
    <name evidence="1" type="primary">dnaJ</name>
    <name type="ordered locus">pc0468</name>
</gene>
<comment type="function">
    <text evidence="1">Participates actively in the response to hyperosmotic and heat shock by preventing the aggregation of stress-denatured proteins and by disaggregating proteins, also in an autonomous, DnaK-independent fashion. Unfolded proteins bind initially to DnaJ; upon interaction with the DnaJ-bound protein, DnaK hydrolyzes its bound ATP, resulting in the formation of a stable complex. GrpE releases ADP from DnaK; ATP binding to DnaK triggers the release of the substrate protein, thus completing the reaction cycle. Several rounds of ATP-dependent interactions between DnaJ, DnaK and GrpE are required for fully efficient folding. Also involved, together with DnaK and GrpE, in the DNA replication of plasmids through activation of initiation proteins.</text>
</comment>
<comment type="cofactor">
    <cofactor evidence="1">
        <name>Zn(2+)</name>
        <dbReference type="ChEBI" id="CHEBI:29105"/>
    </cofactor>
    <text evidence="1">Binds 2 Zn(2+) ions per monomer.</text>
</comment>
<comment type="subunit">
    <text evidence="1">Homodimer.</text>
</comment>
<comment type="subcellular location">
    <subcellularLocation>
        <location evidence="1">Cytoplasm</location>
    </subcellularLocation>
</comment>
<comment type="domain">
    <text evidence="1">The J domain is necessary and sufficient to stimulate DnaK ATPase activity. Zinc center 1 plays an important role in the autonomous, DnaK-independent chaperone activity of DnaJ. Zinc center 2 is essential for interaction with DnaK and for DnaJ activity.</text>
</comment>
<comment type="similarity">
    <text evidence="1">Belongs to the DnaJ family.</text>
</comment>